<sequence>MAGFGLPNFGQLTEAFKKAKEIQQNAQKLQDELESMEIEGKSDDEMIKVWISGNQLPLRVEVNENISTANKEEIEKNILEAIKKAHESSTTTMKERMNDLTGGLNLNLPGLDNNDS</sequence>
<dbReference type="EMBL" id="BX548174">
    <property type="protein sequence ID" value="CAE18479.1"/>
    <property type="molecule type" value="Genomic_DNA"/>
</dbReference>
<dbReference type="RefSeq" id="WP_011131658.1">
    <property type="nucleotide sequence ID" value="NC_005072.1"/>
</dbReference>
<dbReference type="SMR" id="Q7V3Q0"/>
<dbReference type="STRING" id="59919.PMM0020"/>
<dbReference type="KEGG" id="pmm:PMM0020"/>
<dbReference type="eggNOG" id="COG0718">
    <property type="taxonomic scope" value="Bacteria"/>
</dbReference>
<dbReference type="HOGENOM" id="CLU_140930_0_1_3"/>
<dbReference type="OrthoDB" id="487780at2"/>
<dbReference type="Proteomes" id="UP000001026">
    <property type="component" value="Chromosome"/>
</dbReference>
<dbReference type="GO" id="GO:0043590">
    <property type="term" value="C:bacterial nucleoid"/>
    <property type="evidence" value="ECO:0007669"/>
    <property type="project" value="UniProtKB-UniRule"/>
</dbReference>
<dbReference type="GO" id="GO:0005829">
    <property type="term" value="C:cytosol"/>
    <property type="evidence" value="ECO:0007669"/>
    <property type="project" value="TreeGrafter"/>
</dbReference>
<dbReference type="GO" id="GO:0003677">
    <property type="term" value="F:DNA binding"/>
    <property type="evidence" value="ECO:0007669"/>
    <property type="project" value="UniProtKB-UniRule"/>
</dbReference>
<dbReference type="Gene3D" id="3.30.1310.10">
    <property type="entry name" value="Nucleoid-associated protein YbaB-like domain"/>
    <property type="match status" value="1"/>
</dbReference>
<dbReference type="HAMAP" id="MF_00274">
    <property type="entry name" value="DNA_YbaB_EbfC"/>
    <property type="match status" value="1"/>
</dbReference>
<dbReference type="InterPro" id="IPR036894">
    <property type="entry name" value="YbaB-like_sf"/>
</dbReference>
<dbReference type="InterPro" id="IPR004401">
    <property type="entry name" value="YbaB/EbfC"/>
</dbReference>
<dbReference type="NCBIfam" id="TIGR00103">
    <property type="entry name" value="DNA_YbaB_EbfC"/>
    <property type="match status" value="1"/>
</dbReference>
<dbReference type="PANTHER" id="PTHR33449">
    <property type="entry name" value="NUCLEOID-ASSOCIATED PROTEIN YBAB"/>
    <property type="match status" value="1"/>
</dbReference>
<dbReference type="PANTHER" id="PTHR33449:SF1">
    <property type="entry name" value="NUCLEOID-ASSOCIATED PROTEIN YBAB"/>
    <property type="match status" value="1"/>
</dbReference>
<dbReference type="Pfam" id="PF02575">
    <property type="entry name" value="YbaB_DNA_bd"/>
    <property type="match status" value="1"/>
</dbReference>
<dbReference type="PIRSF" id="PIRSF004555">
    <property type="entry name" value="UCP004555"/>
    <property type="match status" value="1"/>
</dbReference>
<dbReference type="SUPFAM" id="SSF82607">
    <property type="entry name" value="YbaB-like"/>
    <property type="match status" value="1"/>
</dbReference>
<comment type="function">
    <text evidence="1">Binds to DNA and alters its conformation. May be involved in regulation of gene expression, nucleoid organization and DNA protection.</text>
</comment>
<comment type="subunit">
    <text evidence="1">Homodimer.</text>
</comment>
<comment type="subcellular location">
    <subcellularLocation>
        <location evidence="1">Cytoplasm</location>
        <location evidence="1">Nucleoid</location>
    </subcellularLocation>
</comment>
<comment type="similarity">
    <text evidence="1">Belongs to the YbaB/EbfC family.</text>
</comment>
<evidence type="ECO:0000255" key="1">
    <source>
        <dbReference type="HAMAP-Rule" id="MF_00274"/>
    </source>
</evidence>
<evidence type="ECO:0000256" key="2">
    <source>
        <dbReference type="SAM" id="MobiDB-lite"/>
    </source>
</evidence>
<organism>
    <name type="scientific">Prochlorococcus marinus subsp. pastoris (strain CCMP1986 / NIES-2087 / MED4)</name>
    <dbReference type="NCBI Taxonomy" id="59919"/>
    <lineage>
        <taxon>Bacteria</taxon>
        <taxon>Bacillati</taxon>
        <taxon>Cyanobacteriota</taxon>
        <taxon>Cyanophyceae</taxon>
        <taxon>Synechococcales</taxon>
        <taxon>Prochlorococcaceae</taxon>
        <taxon>Prochlorococcus</taxon>
    </lineage>
</organism>
<keyword id="KW-0963">Cytoplasm</keyword>
<keyword id="KW-0238">DNA-binding</keyword>
<protein>
    <recommendedName>
        <fullName evidence="1">Nucleoid-associated protein PMM0020</fullName>
    </recommendedName>
</protein>
<name>Y020_PROMP</name>
<proteinExistence type="inferred from homology"/>
<accession>Q7V3Q0</accession>
<feature type="chain" id="PRO_0000170422" description="Nucleoid-associated protein PMM0020">
    <location>
        <begin position="1"/>
        <end position="116"/>
    </location>
</feature>
<feature type="region of interest" description="Disordered" evidence="2">
    <location>
        <begin position="87"/>
        <end position="116"/>
    </location>
</feature>
<feature type="compositionally biased region" description="Basic and acidic residues" evidence="2">
    <location>
        <begin position="87"/>
        <end position="98"/>
    </location>
</feature>
<feature type="compositionally biased region" description="Low complexity" evidence="2">
    <location>
        <begin position="99"/>
        <end position="116"/>
    </location>
</feature>
<gene>
    <name type="ordered locus">PMM0020</name>
</gene>
<reference key="1">
    <citation type="journal article" date="2003" name="Nature">
        <title>Genome divergence in two Prochlorococcus ecotypes reflects oceanic niche differentiation.</title>
        <authorList>
            <person name="Rocap G."/>
            <person name="Larimer F.W."/>
            <person name="Lamerdin J.E."/>
            <person name="Malfatti S."/>
            <person name="Chain P."/>
            <person name="Ahlgren N.A."/>
            <person name="Arellano A."/>
            <person name="Coleman M."/>
            <person name="Hauser L."/>
            <person name="Hess W.R."/>
            <person name="Johnson Z.I."/>
            <person name="Land M.L."/>
            <person name="Lindell D."/>
            <person name="Post A.F."/>
            <person name="Regala W."/>
            <person name="Shah M."/>
            <person name="Shaw S.L."/>
            <person name="Steglich C."/>
            <person name="Sullivan M.B."/>
            <person name="Ting C.S."/>
            <person name="Tolonen A."/>
            <person name="Webb E.A."/>
            <person name="Zinser E.R."/>
            <person name="Chisholm S.W."/>
        </authorList>
    </citation>
    <scope>NUCLEOTIDE SEQUENCE [LARGE SCALE GENOMIC DNA]</scope>
    <source>
        <strain>CCMP1986 / NIES-2087 / MED4</strain>
    </source>
</reference>